<dbReference type="EMBL" id="CP000527">
    <property type="protein sequence ID" value="ABM29044.1"/>
    <property type="molecule type" value="Genomic_DNA"/>
</dbReference>
<dbReference type="RefSeq" id="WP_010938257.1">
    <property type="nucleotide sequence ID" value="NC_008751.1"/>
</dbReference>
<dbReference type="SMR" id="A1VF28"/>
<dbReference type="KEGG" id="dvl:Dvul_2028"/>
<dbReference type="HOGENOM" id="CLU_078938_3_0_7"/>
<dbReference type="Proteomes" id="UP000009173">
    <property type="component" value="Chromosome"/>
</dbReference>
<dbReference type="GO" id="GO:1990904">
    <property type="term" value="C:ribonucleoprotein complex"/>
    <property type="evidence" value="ECO:0007669"/>
    <property type="project" value="UniProtKB-KW"/>
</dbReference>
<dbReference type="GO" id="GO:0005840">
    <property type="term" value="C:ribosome"/>
    <property type="evidence" value="ECO:0007669"/>
    <property type="project" value="UniProtKB-KW"/>
</dbReference>
<dbReference type="GO" id="GO:0019843">
    <property type="term" value="F:rRNA binding"/>
    <property type="evidence" value="ECO:0007669"/>
    <property type="project" value="UniProtKB-UniRule"/>
</dbReference>
<dbReference type="GO" id="GO:0003735">
    <property type="term" value="F:structural constituent of ribosome"/>
    <property type="evidence" value="ECO:0007669"/>
    <property type="project" value="InterPro"/>
</dbReference>
<dbReference type="GO" id="GO:0006412">
    <property type="term" value="P:translation"/>
    <property type="evidence" value="ECO:0007669"/>
    <property type="project" value="UniProtKB-UniRule"/>
</dbReference>
<dbReference type="FunFam" id="3.40.5.10:FF:000003">
    <property type="entry name" value="50S ribosomal protein L9"/>
    <property type="match status" value="1"/>
</dbReference>
<dbReference type="Gene3D" id="3.10.430.100">
    <property type="entry name" value="Ribosomal protein L9, C-terminal domain"/>
    <property type="match status" value="1"/>
</dbReference>
<dbReference type="Gene3D" id="3.40.5.10">
    <property type="entry name" value="Ribosomal protein L9, N-terminal domain"/>
    <property type="match status" value="1"/>
</dbReference>
<dbReference type="HAMAP" id="MF_00503">
    <property type="entry name" value="Ribosomal_bL9"/>
    <property type="match status" value="1"/>
</dbReference>
<dbReference type="InterPro" id="IPR000244">
    <property type="entry name" value="Ribosomal_bL9"/>
</dbReference>
<dbReference type="InterPro" id="IPR009027">
    <property type="entry name" value="Ribosomal_bL9/RNase_H1_N"/>
</dbReference>
<dbReference type="InterPro" id="IPR020594">
    <property type="entry name" value="Ribosomal_bL9_bac/chp"/>
</dbReference>
<dbReference type="InterPro" id="IPR020069">
    <property type="entry name" value="Ribosomal_bL9_C"/>
</dbReference>
<dbReference type="InterPro" id="IPR036791">
    <property type="entry name" value="Ribosomal_bL9_C_sf"/>
</dbReference>
<dbReference type="InterPro" id="IPR020070">
    <property type="entry name" value="Ribosomal_bL9_N"/>
</dbReference>
<dbReference type="InterPro" id="IPR036935">
    <property type="entry name" value="Ribosomal_bL9_N_sf"/>
</dbReference>
<dbReference type="NCBIfam" id="TIGR00158">
    <property type="entry name" value="L9"/>
    <property type="match status" value="1"/>
</dbReference>
<dbReference type="PANTHER" id="PTHR21368">
    <property type="entry name" value="50S RIBOSOMAL PROTEIN L9"/>
    <property type="match status" value="1"/>
</dbReference>
<dbReference type="Pfam" id="PF03948">
    <property type="entry name" value="Ribosomal_L9_C"/>
    <property type="match status" value="1"/>
</dbReference>
<dbReference type="Pfam" id="PF01281">
    <property type="entry name" value="Ribosomal_L9_N"/>
    <property type="match status" value="1"/>
</dbReference>
<dbReference type="SUPFAM" id="SSF55658">
    <property type="entry name" value="L9 N-domain-like"/>
    <property type="match status" value="1"/>
</dbReference>
<dbReference type="SUPFAM" id="SSF55653">
    <property type="entry name" value="Ribosomal protein L9 C-domain"/>
    <property type="match status" value="1"/>
</dbReference>
<dbReference type="PROSITE" id="PS00651">
    <property type="entry name" value="RIBOSOMAL_L9"/>
    <property type="match status" value="1"/>
</dbReference>
<protein>
    <recommendedName>
        <fullName evidence="1">Large ribosomal subunit protein bL9</fullName>
    </recommendedName>
    <alternativeName>
        <fullName evidence="2">50S ribosomal protein L9</fullName>
    </alternativeName>
</protein>
<reference key="1">
    <citation type="journal article" date="2009" name="Environ. Microbiol.">
        <title>Contribution of mobile genetic elements to Desulfovibrio vulgaris genome plasticity.</title>
        <authorList>
            <person name="Walker C.B."/>
            <person name="Stolyar S."/>
            <person name="Chivian D."/>
            <person name="Pinel N."/>
            <person name="Gabster J.A."/>
            <person name="Dehal P.S."/>
            <person name="He Z."/>
            <person name="Yang Z.K."/>
            <person name="Yen H.C."/>
            <person name="Zhou J."/>
            <person name="Wall J.D."/>
            <person name="Hazen T.C."/>
            <person name="Arkin A.P."/>
            <person name="Stahl D.A."/>
        </authorList>
    </citation>
    <scope>NUCLEOTIDE SEQUENCE [LARGE SCALE GENOMIC DNA]</scope>
    <source>
        <strain>DP4</strain>
    </source>
</reference>
<keyword id="KW-0687">Ribonucleoprotein</keyword>
<keyword id="KW-0689">Ribosomal protein</keyword>
<keyword id="KW-0694">RNA-binding</keyword>
<keyword id="KW-0699">rRNA-binding</keyword>
<proteinExistence type="inferred from homology"/>
<evidence type="ECO:0000255" key="1">
    <source>
        <dbReference type="HAMAP-Rule" id="MF_00503"/>
    </source>
</evidence>
<evidence type="ECO:0000305" key="2"/>
<name>RL9_NITV4</name>
<feature type="chain" id="PRO_1000014773" description="Large ribosomal subunit protein bL9">
    <location>
        <begin position="1"/>
        <end position="167"/>
    </location>
</feature>
<accession>A1VF28</accession>
<sequence>MKIILRADVENLGRLGDVVTVKPGFGRNYLLPQGLGMLASQANLKAFELERKKLQARMDALRNAAADIAAKLEGLVLAIPMRVGENDKLYGSVTTAIIGDGLAAQGIEVDRRRILLDSAIRALGEYPVRVRLHADVTAEILVKVVSEDKVNDVAESAPAEEPEAAAE</sequence>
<gene>
    <name evidence="1" type="primary">rplI</name>
    <name type="ordered locus">Dvul_2028</name>
</gene>
<comment type="function">
    <text evidence="1">Binds to the 23S rRNA.</text>
</comment>
<comment type="similarity">
    <text evidence="1">Belongs to the bacterial ribosomal protein bL9 family.</text>
</comment>
<organism>
    <name type="scientific">Nitratidesulfovibrio vulgaris (strain DP4)</name>
    <name type="common">Desulfovibrio vulgaris</name>
    <dbReference type="NCBI Taxonomy" id="391774"/>
    <lineage>
        <taxon>Bacteria</taxon>
        <taxon>Pseudomonadati</taxon>
        <taxon>Thermodesulfobacteriota</taxon>
        <taxon>Desulfovibrionia</taxon>
        <taxon>Desulfovibrionales</taxon>
        <taxon>Desulfovibrionaceae</taxon>
        <taxon>Nitratidesulfovibrio</taxon>
    </lineage>
</organism>